<accession>Q8CNT5</accession>
<comment type="function">
    <text evidence="1">Catalyzes the formation of S-adenosylmethionine (AdoMet) from methionine and ATP. The overall synthetic reaction is composed of two sequential steps, AdoMet formation and the subsequent tripolyphosphate hydrolysis which occurs prior to release of AdoMet from the enzyme.</text>
</comment>
<comment type="catalytic activity">
    <reaction evidence="1">
        <text>L-methionine + ATP + H2O = S-adenosyl-L-methionine + phosphate + diphosphate</text>
        <dbReference type="Rhea" id="RHEA:21080"/>
        <dbReference type="ChEBI" id="CHEBI:15377"/>
        <dbReference type="ChEBI" id="CHEBI:30616"/>
        <dbReference type="ChEBI" id="CHEBI:33019"/>
        <dbReference type="ChEBI" id="CHEBI:43474"/>
        <dbReference type="ChEBI" id="CHEBI:57844"/>
        <dbReference type="ChEBI" id="CHEBI:59789"/>
        <dbReference type="EC" id="2.5.1.6"/>
    </reaction>
</comment>
<comment type="cofactor">
    <cofactor evidence="1">
        <name>Mg(2+)</name>
        <dbReference type="ChEBI" id="CHEBI:18420"/>
    </cofactor>
    <text evidence="1">Binds 2 divalent ions per subunit.</text>
</comment>
<comment type="cofactor">
    <cofactor evidence="1">
        <name>K(+)</name>
        <dbReference type="ChEBI" id="CHEBI:29103"/>
    </cofactor>
    <text evidence="1">Binds 1 potassium ion per subunit.</text>
</comment>
<comment type="pathway">
    <text evidence="1">Amino-acid biosynthesis; S-adenosyl-L-methionine biosynthesis; S-adenosyl-L-methionine from L-methionine: step 1/1.</text>
</comment>
<comment type="subunit">
    <text evidence="1">Homotetramer; dimer of dimers.</text>
</comment>
<comment type="subcellular location">
    <subcellularLocation>
        <location evidence="1">Cytoplasm</location>
    </subcellularLocation>
</comment>
<comment type="similarity">
    <text evidence="1">Belongs to the AdoMet synthase family.</text>
</comment>
<gene>
    <name evidence="1" type="primary">metK</name>
    <name type="ordered locus">SE_1458</name>
</gene>
<sequence>MTYNKRLFTSESVTEGHPDKIADQVSDAILDEILKDDPNARVACETTVTTGMALISGEISTTTYVDIPKVVRETIKDIGYTRAKYGYDSQTMAVLTAIDEQSPDIAQGVDKALEYRNDISEEEIEATGAGDQGLMFGYATDETDTYMPLPIFLSHQLAKRLADVRKDEILDYLRPDGKVQVTVEYGEDDKPRRIDTIVVSTQHAEDVELAQIEKDIKTHVIYPTVDKALLDDETKFYINPTGRFVIGGPQGDAGLTGRKIIVDTYGGYARHGGGCFSGKDPTKVDRSAAYAARYVAKNIVAAGLAKQCEVQLAYAIGVAEPVSISINTFDTGKVSEARLVEAVRKHFDLRPAGIIKMLDLKQPIYRQTAAYGHFGRTDVLLPWEKLDKVNVLKDAVEIQ</sequence>
<evidence type="ECO:0000255" key="1">
    <source>
        <dbReference type="HAMAP-Rule" id="MF_00086"/>
    </source>
</evidence>
<reference key="1">
    <citation type="journal article" date="2003" name="Mol. Microbiol.">
        <title>Genome-based analysis of virulence genes in a non-biofilm-forming Staphylococcus epidermidis strain (ATCC 12228).</title>
        <authorList>
            <person name="Zhang Y.-Q."/>
            <person name="Ren S.-X."/>
            <person name="Li H.-L."/>
            <person name="Wang Y.-X."/>
            <person name="Fu G."/>
            <person name="Yang J."/>
            <person name="Qin Z.-Q."/>
            <person name="Miao Y.-G."/>
            <person name="Wang W.-Y."/>
            <person name="Chen R.-S."/>
            <person name="Shen Y."/>
            <person name="Chen Z."/>
            <person name="Yuan Z.-H."/>
            <person name="Zhao G.-P."/>
            <person name="Qu D."/>
            <person name="Danchin A."/>
            <person name="Wen Y.-M."/>
        </authorList>
    </citation>
    <scope>NUCLEOTIDE SEQUENCE [LARGE SCALE GENOMIC DNA]</scope>
    <source>
        <strain>ATCC 12228 / FDA PCI 1200</strain>
    </source>
</reference>
<protein>
    <recommendedName>
        <fullName evidence="1">S-adenosylmethionine synthase</fullName>
        <shortName evidence="1">AdoMet synthase</shortName>
        <ecNumber evidence="1">2.5.1.6</ecNumber>
    </recommendedName>
    <alternativeName>
        <fullName evidence="1">MAT</fullName>
    </alternativeName>
    <alternativeName>
        <fullName evidence="1">Methionine adenosyltransferase</fullName>
    </alternativeName>
</protein>
<dbReference type="EC" id="2.5.1.6" evidence="1"/>
<dbReference type="EMBL" id="AE015929">
    <property type="protein sequence ID" value="AAO05057.1"/>
    <property type="molecule type" value="Genomic_DNA"/>
</dbReference>
<dbReference type="RefSeq" id="NP_765013.1">
    <property type="nucleotide sequence ID" value="NC_004461.1"/>
</dbReference>
<dbReference type="RefSeq" id="WP_001829830.1">
    <property type="nucleotide sequence ID" value="NZ_WBME01000050.1"/>
</dbReference>
<dbReference type="SMR" id="Q8CNT5"/>
<dbReference type="GeneID" id="50018435"/>
<dbReference type="KEGG" id="sep:SE_1458"/>
<dbReference type="PATRIC" id="fig|176280.10.peg.1424"/>
<dbReference type="eggNOG" id="COG0192">
    <property type="taxonomic scope" value="Bacteria"/>
</dbReference>
<dbReference type="HOGENOM" id="CLU_041802_1_1_9"/>
<dbReference type="OrthoDB" id="9801686at2"/>
<dbReference type="UniPathway" id="UPA00315">
    <property type="reaction ID" value="UER00080"/>
</dbReference>
<dbReference type="Proteomes" id="UP000001411">
    <property type="component" value="Chromosome"/>
</dbReference>
<dbReference type="GO" id="GO:0005737">
    <property type="term" value="C:cytoplasm"/>
    <property type="evidence" value="ECO:0007669"/>
    <property type="project" value="UniProtKB-SubCell"/>
</dbReference>
<dbReference type="GO" id="GO:0005524">
    <property type="term" value="F:ATP binding"/>
    <property type="evidence" value="ECO:0007669"/>
    <property type="project" value="UniProtKB-UniRule"/>
</dbReference>
<dbReference type="GO" id="GO:0000287">
    <property type="term" value="F:magnesium ion binding"/>
    <property type="evidence" value="ECO:0007669"/>
    <property type="project" value="UniProtKB-UniRule"/>
</dbReference>
<dbReference type="GO" id="GO:0004478">
    <property type="term" value="F:methionine adenosyltransferase activity"/>
    <property type="evidence" value="ECO:0007669"/>
    <property type="project" value="UniProtKB-UniRule"/>
</dbReference>
<dbReference type="GO" id="GO:0006730">
    <property type="term" value="P:one-carbon metabolic process"/>
    <property type="evidence" value="ECO:0007669"/>
    <property type="project" value="UniProtKB-KW"/>
</dbReference>
<dbReference type="GO" id="GO:0006556">
    <property type="term" value="P:S-adenosylmethionine biosynthetic process"/>
    <property type="evidence" value="ECO:0007669"/>
    <property type="project" value="UniProtKB-UniRule"/>
</dbReference>
<dbReference type="CDD" id="cd18079">
    <property type="entry name" value="S-AdoMet_synt"/>
    <property type="match status" value="1"/>
</dbReference>
<dbReference type="FunFam" id="3.30.300.10:FF:000003">
    <property type="entry name" value="S-adenosylmethionine synthase"/>
    <property type="match status" value="1"/>
</dbReference>
<dbReference type="FunFam" id="3.30.300.10:FF:000004">
    <property type="entry name" value="S-adenosylmethionine synthase"/>
    <property type="match status" value="1"/>
</dbReference>
<dbReference type="Gene3D" id="3.30.300.10">
    <property type="match status" value="3"/>
</dbReference>
<dbReference type="HAMAP" id="MF_00086">
    <property type="entry name" value="S_AdoMet_synth1"/>
    <property type="match status" value="1"/>
</dbReference>
<dbReference type="InterPro" id="IPR022631">
    <property type="entry name" value="ADOMET_SYNTHASE_CS"/>
</dbReference>
<dbReference type="InterPro" id="IPR022630">
    <property type="entry name" value="S-AdoMet_synt_C"/>
</dbReference>
<dbReference type="InterPro" id="IPR022629">
    <property type="entry name" value="S-AdoMet_synt_central"/>
</dbReference>
<dbReference type="InterPro" id="IPR022628">
    <property type="entry name" value="S-AdoMet_synt_N"/>
</dbReference>
<dbReference type="InterPro" id="IPR002133">
    <property type="entry name" value="S-AdoMet_synthetase"/>
</dbReference>
<dbReference type="InterPro" id="IPR022636">
    <property type="entry name" value="S-AdoMet_synthetase_sfam"/>
</dbReference>
<dbReference type="NCBIfam" id="TIGR01034">
    <property type="entry name" value="metK"/>
    <property type="match status" value="1"/>
</dbReference>
<dbReference type="PANTHER" id="PTHR11964">
    <property type="entry name" value="S-ADENOSYLMETHIONINE SYNTHETASE"/>
    <property type="match status" value="1"/>
</dbReference>
<dbReference type="Pfam" id="PF02773">
    <property type="entry name" value="S-AdoMet_synt_C"/>
    <property type="match status" value="1"/>
</dbReference>
<dbReference type="Pfam" id="PF02772">
    <property type="entry name" value="S-AdoMet_synt_M"/>
    <property type="match status" value="1"/>
</dbReference>
<dbReference type="Pfam" id="PF00438">
    <property type="entry name" value="S-AdoMet_synt_N"/>
    <property type="match status" value="1"/>
</dbReference>
<dbReference type="PIRSF" id="PIRSF000497">
    <property type="entry name" value="MAT"/>
    <property type="match status" value="1"/>
</dbReference>
<dbReference type="SUPFAM" id="SSF55973">
    <property type="entry name" value="S-adenosylmethionine synthetase"/>
    <property type="match status" value="3"/>
</dbReference>
<dbReference type="PROSITE" id="PS00376">
    <property type="entry name" value="ADOMET_SYNTHASE_1"/>
    <property type="match status" value="1"/>
</dbReference>
<dbReference type="PROSITE" id="PS00377">
    <property type="entry name" value="ADOMET_SYNTHASE_2"/>
    <property type="match status" value="1"/>
</dbReference>
<keyword id="KW-0067">ATP-binding</keyword>
<keyword id="KW-0963">Cytoplasm</keyword>
<keyword id="KW-0460">Magnesium</keyword>
<keyword id="KW-0479">Metal-binding</keyword>
<keyword id="KW-0547">Nucleotide-binding</keyword>
<keyword id="KW-0554">One-carbon metabolism</keyword>
<keyword id="KW-0630">Potassium</keyword>
<keyword id="KW-0808">Transferase</keyword>
<feature type="chain" id="PRO_0000174593" description="S-adenosylmethionine synthase">
    <location>
        <begin position="1"/>
        <end position="399"/>
    </location>
</feature>
<feature type="region of interest" description="Flexible loop" evidence="1">
    <location>
        <begin position="101"/>
        <end position="111"/>
    </location>
</feature>
<feature type="binding site" description="in other chain" evidence="1">
    <location>
        <position position="17"/>
    </location>
    <ligand>
        <name>ATP</name>
        <dbReference type="ChEBI" id="CHEBI:30616"/>
        <note>ligand shared between two neighboring subunits</note>
    </ligand>
</feature>
<feature type="binding site" evidence="1">
    <location>
        <position position="19"/>
    </location>
    <ligand>
        <name>Mg(2+)</name>
        <dbReference type="ChEBI" id="CHEBI:18420"/>
    </ligand>
</feature>
<feature type="binding site" evidence="1">
    <location>
        <position position="45"/>
    </location>
    <ligand>
        <name>K(+)</name>
        <dbReference type="ChEBI" id="CHEBI:29103"/>
    </ligand>
</feature>
<feature type="binding site" description="in other chain" evidence="1">
    <location>
        <position position="58"/>
    </location>
    <ligand>
        <name>L-methionine</name>
        <dbReference type="ChEBI" id="CHEBI:57844"/>
        <note>ligand shared between two neighboring subunits</note>
    </ligand>
</feature>
<feature type="binding site" description="in other chain" evidence="1">
    <location>
        <position position="101"/>
    </location>
    <ligand>
        <name>L-methionine</name>
        <dbReference type="ChEBI" id="CHEBI:57844"/>
        <note>ligand shared between two neighboring subunits</note>
    </ligand>
</feature>
<feature type="binding site" description="in other chain" evidence="1">
    <location>
        <begin position="176"/>
        <end position="178"/>
    </location>
    <ligand>
        <name>ATP</name>
        <dbReference type="ChEBI" id="CHEBI:30616"/>
        <note>ligand shared between two neighboring subunits</note>
    </ligand>
</feature>
<feature type="binding site" description="in other chain" evidence="1">
    <location>
        <begin position="243"/>
        <end position="244"/>
    </location>
    <ligand>
        <name>ATP</name>
        <dbReference type="ChEBI" id="CHEBI:30616"/>
        <note>ligand shared between two neighboring subunits</note>
    </ligand>
</feature>
<feature type="binding site" evidence="1">
    <location>
        <position position="252"/>
    </location>
    <ligand>
        <name>ATP</name>
        <dbReference type="ChEBI" id="CHEBI:30616"/>
        <note>ligand shared between two neighboring subunits</note>
    </ligand>
</feature>
<feature type="binding site" evidence="1">
    <location>
        <position position="252"/>
    </location>
    <ligand>
        <name>L-methionine</name>
        <dbReference type="ChEBI" id="CHEBI:57844"/>
        <note>ligand shared between two neighboring subunits</note>
    </ligand>
</feature>
<feature type="binding site" description="in other chain" evidence="1">
    <location>
        <begin position="258"/>
        <end position="259"/>
    </location>
    <ligand>
        <name>ATP</name>
        <dbReference type="ChEBI" id="CHEBI:30616"/>
        <note>ligand shared between two neighboring subunits</note>
    </ligand>
</feature>
<feature type="binding site" evidence="1">
    <location>
        <position position="279"/>
    </location>
    <ligand>
        <name>ATP</name>
        <dbReference type="ChEBI" id="CHEBI:30616"/>
        <note>ligand shared between two neighboring subunits</note>
    </ligand>
</feature>
<feature type="binding site" description="in other chain" evidence="1">
    <location>
        <position position="283"/>
    </location>
    <ligand>
        <name>L-methionine</name>
        <dbReference type="ChEBI" id="CHEBI:57844"/>
        <note>ligand shared between two neighboring subunits</note>
    </ligand>
</feature>
<proteinExistence type="inferred from homology"/>
<name>METK_STAES</name>
<organism>
    <name type="scientific">Staphylococcus epidermidis (strain ATCC 12228 / FDA PCI 1200)</name>
    <dbReference type="NCBI Taxonomy" id="176280"/>
    <lineage>
        <taxon>Bacteria</taxon>
        <taxon>Bacillati</taxon>
        <taxon>Bacillota</taxon>
        <taxon>Bacilli</taxon>
        <taxon>Bacillales</taxon>
        <taxon>Staphylococcaceae</taxon>
        <taxon>Staphylococcus</taxon>
    </lineage>
</organism>